<accession>A5VRB2</accession>
<feature type="chain" id="PRO_0000340426" description="Urease accessory protein UreD 2">
    <location>
        <begin position="1"/>
        <end position="302"/>
    </location>
</feature>
<evidence type="ECO:0000255" key="1">
    <source>
        <dbReference type="HAMAP-Rule" id="MF_01384"/>
    </source>
</evidence>
<reference key="1">
    <citation type="journal article" date="2009" name="PLoS ONE">
        <title>Genome degradation in Brucella ovis corresponds with narrowing of its host range and tissue tropism.</title>
        <authorList>
            <person name="Tsolis R.M."/>
            <person name="Seshadri R."/>
            <person name="Santos R.L."/>
            <person name="Sangari F.J."/>
            <person name="Lobo J.M."/>
            <person name="de Jong M.F."/>
            <person name="Ren Q."/>
            <person name="Myers G."/>
            <person name="Brinkac L.M."/>
            <person name="Nelson W.C."/>
            <person name="Deboy R.T."/>
            <person name="Angiuoli S."/>
            <person name="Khouri H."/>
            <person name="Dimitrov G."/>
            <person name="Robinson J.R."/>
            <person name="Mulligan S."/>
            <person name="Walker R.L."/>
            <person name="Elzer P.E."/>
            <person name="Hassan K.A."/>
            <person name="Paulsen I.T."/>
        </authorList>
    </citation>
    <scope>NUCLEOTIDE SEQUENCE [LARGE SCALE GENOMIC DNA]</scope>
    <source>
        <strain>ATCC 25840 / 63/290 / NCTC 10512</strain>
    </source>
</reference>
<protein>
    <recommendedName>
        <fullName evidence="1">Urease accessory protein UreD 2</fullName>
    </recommendedName>
</protein>
<comment type="function">
    <text evidence="1">Required for maturation of urease via the functional incorporation of the urease nickel metallocenter.</text>
</comment>
<comment type="subunit">
    <text evidence="1">UreD, UreF and UreG form a complex that acts as a GTP-hydrolysis-dependent molecular chaperone, activating the urease apoprotein by helping to assemble the nickel containing metallocenter of UreC. The UreE protein probably delivers the nickel.</text>
</comment>
<comment type="subcellular location">
    <subcellularLocation>
        <location evidence="1">Cytoplasm</location>
    </subcellularLocation>
</comment>
<comment type="similarity">
    <text evidence="1">Belongs to the UreD family.</text>
</comment>
<gene>
    <name evidence="1" type="primary">ureD2</name>
    <name type="synonym">ureD-2</name>
    <name type="ordered locus">BOV_1318</name>
</gene>
<dbReference type="EMBL" id="CP000708">
    <property type="protein sequence ID" value="ABQ61923.1"/>
    <property type="molecule type" value="Genomic_DNA"/>
</dbReference>
<dbReference type="RefSeq" id="WP_006013075.1">
    <property type="nucleotide sequence ID" value="NC_009505.1"/>
</dbReference>
<dbReference type="SMR" id="A5VRB2"/>
<dbReference type="GeneID" id="45124713"/>
<dbReference type="KEGG" id="bov:BOV_1318"/>
<dbReference type="HOGENOM" id="CLU_056339_1_0_5"/>
<dbReference type="PhylomeDB" id="A5VRB2"/>
<dbReference type="Proteomes" id="UP000006383">
    <property type="component" value="Chromosome I"/>
</dbReference>
<dbReference type="GO" id="GO:0005737">
    <property type="term" value="C:cytoplasm"/>
    <property type="evidence" value="ECO:0007669"/>
    <property type="project" value="UniProtKB-SubCell"/>
</dbReference>
<dbReference type="GO" id="GO:0016151">
    <property type="term" value="F:nickel cation binding"/>
    <property type="evidence" value="ECO:0007669"/>
    <property type="project" value="UniProtKB-UniRule"/>
</dbReference>
<dbReference type="HAMAP" id="MF_01384">
    <property type="entry name" value="UreD"/>
    <property type="match status" value="1"/>
</dbReference>
<dbReference type="InterPro" id="IPR002669">
    <property type="entry name" value="UreD"/>
</dbReference>
<dbReference type="PANTHER" id="PTHR33643">
    <property type="entry name" value="UREASE ACCESSORY PROTEIN D"/>
    <property type="match status" value="1"/>
</dbReference>
<dbReference type="PANTHER" id="PTHR33643:SF1">
    <property type="entry name" value="UREASE ACCESSORY PROTEIN D"/>
    <property type="match status" value="1"/>
</dbReference>
<dbReference type="Pfam" id="PF01774">
    <property type="entry name" value="UreD"/>
    <property type="match status" value="1"/>
</dbReference>
<organism>
    <name type="scientific">Brucella ovis (strain ATCC 25840 / 63/290 / NCTC 10512)</name>
    <dbReference type="NCBI Taxonomy" id="444178"/>
    <lineage>
        <taxon>Bacteria</taxon>
        <taxon>Pseudomonadati</taxon>
        <taxon>Pseudomonadota</taxon>
        <taxon>Alphaproteobacteria</taxon>
        <taxon>Hyphomicrobiales</taxon>
        <taxon>Brucellaceae</taxon>
        <taxon>Brucella/Ochrobactrum group</taxon>
        <taxon>Brucella</taxon>
    </lineage>
</organism>
<sequence>MLGKARELANYQDEPEQLPTGSFGKNAFLRLGFERRPERTVLATLHRRAPLIVQQALYWDEGMPTLPCVSIISNAGGILQGDRYAIEIDLEPDTQAHVTTQSATRIQEMDANFATQTQTITLGANSYLEYIPHPIIPHKHSRFVQQTEVTIHPTATLIYSEVLMAGRKYYGTGELFHYDLFSSKFHAAHTDGTSLFTEKFIVEPARGNVSRLGAMGSFHVFCNLILLTPKTHADRLFETIDPVFDMDEGIAWGASRLPNDAGLLFKVMGMESAPVRAAIRKIWEAARQEVTGASLPENFLWA</sequence>
<name>URED2_BRUO2</name>
<keyword id="KW-0143">Chaperone</keyword>
<keyword id="KW-0963">Cytoplasm</keyword>
<keyword id="KW-0996">Nickel insertion</keyword>
<proteinExistence type="inferred from homology"/>